<accession>C4L7L3</accession>
<protein>
    <recommendedName>
        <fullName evidence="1">Queuine tRNA-ribosyltransferase</fullName>
        <ecNumber evidence="1">2.4.2.29</ecNumber>
    </recommendedName>
    <alternativeName>
        <fullName evidence="1">Guanine insertion enzyme</fullName>
    </alternativeName>
    <alternativeName>
        <fullName evidence="1">tRNA-guanine transglycosylase</fullName>
    </alternativeName>
</protein>
<reference key="1">
    <citation type="submission" date="2009-05" db="EMBL/GenBank/DDBJ databases">
        <title>Complete sequence of Tolumonas auensis DSM 9187.</title>
        <authorList>
            <consortium name="US DOE Joint Genome Institute"/>
            <person name="Lucas S."/>
            <person name="Copeland A."/>
            <person name="Lapidus A."/>
            <person name="Glavina del Rio T."/>
            <person name="Tice H."/>
            <person name="Bruce D."/>
            <person name="Goodwin L."/>
            <person name="Pitluck S."/>
            <person name="Chertkov O."/>
            <person name="Brettin T."/>
            <person name="Detter J.C."/>
            <person name="Han C."/>
            <person name="Larimer F."/>
            <person name="Land M."/>
            <person name="Hauser L."/>
            <person name="Kyrpides N."/>
            <person name="Mikhailova N."/>
            <person name="Spring S."/>
            <person name="Beller H."/>
        </authorList>
    </citation>
    <scope>NUCLEOTIDE SEQUENCE [LARGE SCALE GENOMIC DNA]</scope>
    <source>
        <strain>DSM 9187 / NBRC 110442 / TA 4</strain>
    </source>
</reference>
<keyword id="KW-0328">Glycosyltransferase</keyword>
<keyword id="KW-0479">Metal-binding</keyword>
<keyword id="KW-0671">Queuosine biosynthesis</keyword>
<keyword id="KW-1185">Reference proteome</keyword>
<keyword id="KW-0808">Transferase</keyword>
<keyword id="KW-0819">tRNA processing</keyword>
<keyword id="KW-0862">Zinc</keyword>
<feature type="chain" id="PRO_1000203665" description="Queuine tRNA-ribosyltransferase">
    <location>
        <begin position="1"/>
        <end position="373"/>
    </location>
</feature>
<feature type="region of interest" description="RNA binding" evidence="1">
    <location>
        <begin position="245"/>
        <end position="251"/>
    </location>
</feature>
<feature type="region of interest" description="RNA binding; important for wobble base 34 recognition" evidence="1">
    <location>
        <begin position="269"/>
        <end position="273"/>
    </location>
</feature>
<feature type="active site" description="Proton acceptor" evidence="1">
    <location>
        <position position="89"/>
    </location>
</feature>
<feature type="active site" description="Nucleophile" evidence="1">
    <location>
        <position position="264"/>
    </location>
</feature>
<feature type="binding site" evidence="1">
    <location>
        <begin position="89"/>
        <end position="93"/>
    </location>
    <ligand>
        <name>substrate</name>
    </ligand>
</feature>
<feature type="binding site" evidence="1">
    <location>
        <position position="143"/>
    </location>
    <ligand>
        <name>substrate</name>
    </ligand>
</feature>
<feature type="binding site" evidence="1">
    <location>
        <position position="187"/>
    </location>
    <ligand>
        <name>substrate</name>
    </ligand>
</feature>
<feature type="binding site" evidence="1">
    <location>
        <position position="214"/>
    </location>
    <ligand>
        <name>substrate</name>
    </ligand>
</feature>
<feature type="binding site" evidence="1">
    <location>
        <position position="302"/>
    </location>
    <ligand>
        <name>Zn(2+)</name>
        <dbReference type="ChEBI" id="CHEBI:29105"/>
    </ligand>
</feature>
<feature type="binding site" evidence="1">
    <location>
        <position position="304"/>
    </location>
    <ligand>
        <name>Zn(2+)</name>
        <dbReference type="ChEBI" id="CHEBI:29105"/>
    </ligand>
</feature>
<feature type="binding site" evidence="1">
    <location>
        <position position="307"/>
    </location>
    <ligand>
        <name>Zn(2+)</name>
        <dbReference type="ChEBI" id="CHEBI:29105"/>
    </ligand>
</feature>
<feature type="binding site" evidence="1">
    <location>
        <position position="333"/>
    </location>
    <ligand>
        <name>Zn(2+)</name>
        <dbReference type="ChEBI" id="CHEBI:29105"/>
    </ligand>
</feature>
<organism>
    <name type="scientific">Tolumonas auensis (strain DSM 9187 / NBRC 110442 / TA 4)</name>
    <dbReference type="NCBI Taxonomy" id="595494"/>
    <lineage>
        <taxon>Bacteria</taxon>
        <taxon>Pseudomonadati</taxon>
        <taxon>Pseudomonadota</taxon>
        <taxon>Gammaproteobacteria</taxon>
        <taxon>Aeromonadales</taxon>
        <taxon>Aeromonadaceae</taxon>
        <taxon>Tolumonas</taxon>
    </lineage>
</organism>
<dbReference type="EC" id="2.4.2.29" evidence="1"/>
<dbReference type="EMBL" id="CP001616">
    <property type="protein sequence ID" value="ACQ93629.1"/>
    <property type="molecule type" value="Genomic_DNA"/>
</dbReference>
<dbReference type="RefSeq" id="WP_015879097.1">
    <property type="nucleotide sequence ID" value="NC_012691.1"/>
</dbReference>
<dbReference type="SMR" id="C4L7L3"/>
<dbReference type="STRING" id="595494.Tola_2030"/>
<dbReference type="KEGG" id="tau:Tola_2030"/>
<dbReference type="eggNOG" id="COG0343">
    <property type="taxonomic scope" value="Bacteria"/>
</dbReference>
<dbReference type="HOGENOM" id="CLU_022060_0_1_6"/>
<dbReference type="OrthoDB" id="9805417at2"/>
<dbReference type="UniPathway" id="UPA00392"/>
<dbReference type="Proteomes" id="UP000009073">
    <property type="component" value="Chromosome"/>
</dbReference>
<dbReference type="GO" id="GO:0005829">
    <property type="term" value="C:cytosol"/>
    <property type="evidence" value="ECO:0007669"/>
    <property type="project" value="TreeGrafter"/>
</dbReference>
<dbReference type="GO" id="GO:0046872">
    <property type="term" value="F:metal ion binding"/>
    <property type="evidence" value="ECO:0007669"/>
    <property type="project" value="UniProtKB-KW"/>
</dbReference>
<dbReference type="GO" id="GO:0008479">
    <property type="term" value="F:tRNA-guanosine(34) queuine transglycosylase activity"/>
    <property type="evidence" value="ECO:0007669"/>
    <property type="project" value="UniProtKB-UniRule"/>
</dbReference>
<dbReference type="GO" id="GO:0008616">
    <property type="term" value="P:queuosine biosynthetic process"/>
    <property type="evidence" value="ECO:0007669"/>
    <property type="project" value="UniProtKB-UniRule"/>
</dbReference>
<dbReference type="GO" id="GO:0002099">
    <property type="term" value="P:tRNA wobble guanine modification"/>
    <property type="evidence" value="ECO:0007669"/>
    <property type="project" value="TreeGrafter"/>
</dbReference>
<dbReference type="GO" id="GO:0101030">
    <property type="term" value="P:tRNA-guanine transglycosylation"/>
    <property type="evidence" value="ECO:0007669"/>
    <property type="project" value="InterPro"/>
</dbReference>
<dbReference type="FunFam" id="3.20.20.105:FF:000001">
    <property type="entry name" value="Queuine tRNA-ribosyltransferase"/>
    <property type="match status" value="1"/>
</dbReference>
<dbReference type="Gene3D" id="3.20.20.105">
    <property type="entry name" value="Queuine tRNA-ribosyltransferase-like"/>
    <property type="match status" value="1"/>
</dbReference>
<dbReference type="HAMAP" id="MF_00168">
    <property type="entry name" value="Q_tRNA_Tgt"/>
    <property type="match status" value="1"/>
</dbReference>
<dbReference type="InterPro" id="IPR050076">
    <property type="entry name" value="ArchSynthase1/Queuine_TRR"/>
</dbReference>
<dbReference type="InterPro" id="IPR004803">
    <property type="entry name" value="TGT"/>
</dbReference>
<dbReference type="InterPro" id="IPR036511">
    <property type="entry name" value="TGT-like_sf"/>
</dbReference>
<dbReference type="InterPro" id="IPR002616">
    <property type="entry name" value="tRNA_ribo_trans-like"/>
</dbReference>
<dbReference type="NCBIfam" id="TIGR00430">
    <property type="entry name" value="Q_tRNA_tgt"/>
    <property type="match status" value="1"/>
</dbReference>
<dbReference type="NCBIfam" id="TIGR00449">
    <property type="entry name" value="tgt_general"/>
    <property type="match status" value="1"/>
</dbReference>
<dbReference type="PANTHER" id="PTHR46499">
    <property type="entry name" value="QUEUINE TRNA-RIBOSYLTRANSFERASE"/>
    <property type="match status" value="1"/>
</dbReference>
<dbReference type="PANTHER" id="PTHR46499:SF1">
    <property type="entry name" value="QUEUINE TRNA-RIBOSYLTRANSFERASE"/>
    <property type="match status" value="1"/>
</dbReference>
<dbReference type="Pfam" id="PF01702">
    <property type="entry name" value="TGT"/>
    <property type="match status" value="1"/>
</dbReference>
<dbReference type="SUPFAM" id="SSF51713">
    <property type="entry name" value="tRNA-guanine transglycosylase"/>
    <property type="match status" value="1"/>
</dbReference>
<proteinExistence type="inferred from homology"/>
<name>TGT_TOLAT</name>
<gene>
    <name evidence="1" type="primary">tgt</name>
    <name type="ordered locus">Tola_2030</name>
</gene>
<evidence type="ECO:0000255" key="1">
    <source>
        <dbReference type="HAMAP-Rule" id="MF_00168"/>
    </source>
</evidence>
<sequence length="373" mass="42449">MKFELKKTEGRARRGRLVFDRGVVETPAFMPVGTYGTVKGMTPEEVKDTGAQILLGNTFHLWLRPGQDIMRKHGDLHDFMNWHGPILTDSGGFQVFSLGHIRKIKEEGVHFRNPINGEKIFLSPEKSMEIQNDLGSDVVMIFDECTPYPATHDVAKKSMEMSLRWATRSRQRFDELENKNALFGIIQGGVYEDLRDVSLKGLLDIGFDGYAVGGLAVGEPKEDMHRILKHVCPQIPEDKPRYLMGVGKPEDLVEGVRRGIDMFDCVMPTRNARNGHLFTTDGVVKIRNAKYKDDVTSLDAECDCYTCKNYTKSYLHHLDRCNEMLGARLNTIHNLRYYQRLMQGLRDAIDAGTLDDFVADFYQRQDKPVPSLD</sequence>
<comment type="function">
    <text evidence="1">Catalyzes the base-exchange of a guanine (G) residue with the queuine precursor 7-aminomethyl-7-deazaguanine (PreQ1) at position 34 (anticodon wobble position) in tRNAs with GU(N) anticodons (tRNA-Asp, -Asn, -His and -Tyr). Catalysis occurs through a double-displacement mechanism. The nucleophile active site attacks the C1' of nucleotide 34 to detach the guanine base from the RNA, forming a covalent enzyme-RNA intermediate. The proton acceptor active site deprotonates the incoming PreQ1, allowing a nucleophilic attack on the C1' of the ribose to form the product. After dissociation, two additional enzymatic reactions on the tRNA convert PreQ1 to queuine (Q), resulting in the hypermodified nucleoside queuosine (7-(((4,5-cis-dihydroxy-2-cyclopenten-1-yl)amino)methyl)-7-deazaguanosine).</text>
</comment>
<comment type="catalytic activity">
    <reaction evidence="1">
        <text>7-aminomethyl-7-carbaguanine + guanosine(34) in tRNA = 7-aminomethyl-7-carbaguanosine(34) in tRNA + guanine</text>
        <dbReference type="Rhea" id="RHEA:24104"/>
        <dbReference type="Rhea" id="RHEA-COMP:10341"/>
        <dbReference type="Rhea" id="RHEA-COMP:10342"/>
        <dbReference type="ChEBI" id="CHEBI:16235"/>
        <dbReference type="ChEBI" id="CHEBI:58703"/>
        <dbReference type="ChEBI" id="CHEBI:74269"/>
        <dbReference type="ChEBI" id="CHEBI:82833"/>
        <dbReference type="EC" id="2.4.2.29"/>
    </reaction>
</comment>
<comment type="cofactor">
    <cofactor evidence="1">
        <name>Zn(2+)</name>
        <dbReference type="ChEBI" id="CHEBI:29105"/>
    </cofactor>
    <text evidence="1">Binds 1 zinc ion per subunit.</text>
</comment>
<comment type="pathway">
    <text evidence="1">tRNA modification; tRNA-queuosine biosynthesis.</text>
</comment>
<comment type="subunit">
    <text evidence="1">Homodimer. Within each dimer, one monomer is responsible for RNA recognition and catalysis, while the other monomer binds to the replacement base PreQ1.</text>
</comment>
<comment type="similarity">
    <text evidence="1">Belongs to the queuine tRNA-ribosyltransferase family.</text>
</comment>